<feature type="chain" id="PRO_0000255844" description="Fatty acid oxidation complex subunit alpha">
    <location>
        <begin position="1"/>
        <end position="719"/>
    </location>
</feature>
<feature type="region of interest" description="Enoyl-CoA hydratase/isomerase" evidence="1">
    <location>
        <begin position="1"/>
        <end position="190"/>
    </location>
</feature>
<feature type="region of interest" description="3-hydroxyacyl-CoA dehydrogenase" evidence="1">
    <location>
        <begin position="313"/>
        <end position="719"/>
    </location>
</feature>
<feature type="active site" description="For 3-hydroxyacyl-CoA dehydrogenase activity" evidence="1">
    <location>
        <position position="452"/>
    </location>
</feature>
<feature type="binding site" evidence="1">
    <location>
        <position position="298"/>
    </location>
    <ligand>
        <name>substrate</name>
    </ligand>
</feature>
<feature type="binding site" evidence="1">
    <location>
        <position position="326"/>
    </location>
    <ligand>
        <name>NAD(+)</name>
        <dbReference type="ChEBI" id="CHEBI:57540"/>
    </ligand>
</feature>
<feature type="binding site" evidence="1">
    <location>
        <position position="345"/>
    </location>
    <ligand>
        <name>NAD(+)</name>
        <dbReference type="ChEBI" id="CHEBI:57540"/>
    </ligand>
</feature>
<feature type="binding site" evidence="1">
    <location>
        <begin position="402"/>
        <end position="404"/>
    </location>
    <ligand>
        <name>NAD(+)</name>
        <dbReference type="ChEBI" id="CHEBI:57540"/>
    </ligand>
</feature>
<feature type="binding site" evidence="1">
    <location>
        <position position="409"/>
    </location>
    <ligand>
        <name>NAD(+)</name>
        <dbReference type="ChEBI" id="CHEBI:57540"/>
    </ligand>
</feature>
<feature type="binding site" evidence="1">
    <location>
        <position position="431"/>
    </location>
    <ligand>
        <name>NAD(+)</name>
        <dbReference type="ChEBI" id="CHEBI:57540"/>
    </ligand>
</feature>
<feature type="binding site" evidence="1">
    <location>
        <position position="455"/>
    </location>
    <ligand>
        <name>NAD(+)</name>
        <dbReference type="ChEBI" id="CHEBI:57540"/>
    </ligand>
</feature>
<feature type="binding site" evidence="1">
    <location>
        <position position="502"/>
    </location>
    <ligand>
        <name>substrate</name>
    </ligand>
</feature>
<feature type="site" description="Important for catalytic activity" evidence="1">
    <location>
        <position position="120"/>
    </location>
</feature>
<feature type="site" description="Important for catalytic activity" evidence="1">
    <location>
        <position position="140"/>
    </location>
</feature>
<proteinExistence type="inferred from homology"/>
<name>FADB_PSYCK</name>
<comment type="function">
    <text evidence="1">Involved in the aerobic and anaerobic degradation of long-chain fatty acids via beta-oxidation cycle. Catalyzes the formation of 3-oxoacyl-CoA from enoyl-CoA via L-3-hydroxyacyl-CoA. It can also use D-3-hydroxyacyl-CoA and cis-3-enoyl-CoA as substrate.</text>
</comment>
<comment type="catalytic activity">
    <reaction evidence="1">
        <text>a (3S)-3-hydroxyacyl-CoA + NAD(+) = a 3-oxoacyl-CoA + NADH + H(+)</text>
        <dbReference type="Rhea" id="RHEA:22432"/>
        <dbReference type="ChEBI" id="CHEBI:15378"/>
        <dbReference type="ChEBI" id="CHEBI:57318"/>
        <dbReference type="ChEBI" id="CHEBI:57540"/>
        <dbReference type="ChEBI" id="CHEBI:57945"/>
        <dbReference type="ChEBI" id="CHEBI:90726"/>
        <dbReference type="EC" id="1.1.1.35"/>
    </reaction>
</comment>
<comment type="catalytic activity">
    <reaction evidence="1">
        <text>a (3S)-3-hydroxyacyl-CoA = a (2E)-enoyl-CoA + H2O</text>
        <dbReference type="Rhea" id="RHEA:16105"/>
        <dbReference type="ChEBI" id="CHEBI:15377"/>
        <dbReference type="ChEBI" id="CHEBI:57318"/>
        <dbReference type="ChEBI" id="CHEBI:58856"/>
        <dbReference type="EC" id="4.2.1.17"/>
    </reaction>
</comment>
<comment type="catalytic activity">
    <reaction evidence="1">
        <text>a 4-saturated-(3S)-3-hydroxyacyl-CoA = a (3E)-enoyl-CoA + H2O</text>
        <dbReference type="Rhea" id="RHEA:20724"/>
        <dbReference type="ChEBI" id="CHEBI:15377"/>
        <dbReference type="ChEBI" id="CHEBI:58521"/>
        <dbReference type="ChEBI" id="CHEBI:137480"/>
        <dbReference type="EC" id="4.2.1.17"/>
    </reaction>
</comment>
<comment type="catalytic activity">
    <reaction evidence="1">
        <text>(3S)-3-hydroxybutanoyl-CoA = (3R)-3-hydroxybutanoyl-CoA</text>
        <dbReference type="Rhea" id="RHEA:21760"/>
        <dbReference type="ChEBI" id="CHEBI:57315"/>
        <dbReference type="ChEBI" id="CHEBI:57316"/>
        <dbReference type="EC" id="5.1.2.3"/>
    </reaction>
</comment>
<comment type="catalytic activity">
    <reaction evidence="1">
        <text>a (3Z)-enoyl-CoA = a 4-saturated (2E)-enoyl-CoA</text>
        <dbReference type="Rhea" id="RHEA:45900"/>
        <dbReference type="ChEBI" id="CHEBI:85097"/>
        <dbReference type="ChEBI" id="CHEBI:85489"/>
        <dbReference type="EC" id="5.3.3.8"/>
    </reaction>
</comment>
<comment type="catalytic activity">
    <reaction evidence="1">
        <text>a (3E)-enoyl-CoA = a 4-saturated (2E)-enoyl-CoA</text>
        <dbReference type="Rhea" id="RHEA:45228"/>
        <dbReference type="ChEBI" id="CHEBI:58521"/>
        <dbReference type="ChEBI" id="CHEBI:85097"/>
        <dbReference type="EC" id="5.3.3.8"/>
    </reaction>
</comment>
<comment type="pathway">
    <text evidence="1">Lipid metabolism; fatty acid beta-oxidation.</text>
</comment>
<comment type="subunit">
    <text evidence="1">Heterotetramer of two alpha chains (FadB) and two beta chains (FadA).</text>
</comment>
<comment type="similarity">
    <text evidence="1">In the N-terminal section; belongs to the enoyl-CoA hydratase/isomerase family.</text>
</comment>
<comment type="similarity">
    <text evidence="1">In the C-terminal section; belongs to the 3-hydroxyacyl-CoA dehydrogenase family.</text>
</comment>
<sequence>MVYQGNRITVTMLEDGIANMQYNAENESVNKFDTETNKQFAEVVNALEKADDIKGLIVTSSKGVFIAGADITEFVASFKQSEEEIKDWVININDAFNRFEDLPFPKVAAINGAALGGGCEMTLVCEYRVMSDKAIIGLPETQLGIFPGFGGTVRSTRVIGIDNALELIATGTPKKALDALKLGLVDATVAADDLQDAAIDLVKKCISDELDWQAKREEKLVPVKLNQLEQAMAFNSAKGMIFAKANPKQYPAPALAIAAIEKHVNLPRDKAIEVEAAGFAKAAKTPQAESLVGLFLSDQLVKKLAKQHSKKAHDINEAAVLGAGIMGGGIAYQAASKGLPIIMKDIKSEQLDLGMGEASKLLGKMVDRGKITPAKMGETLSRIRPTLNYGDFAETDIVIEAVVENPNVKRAVLKEVEGLVKDDCILASNTSTISITFLAEALERPENFVGMHFFNPVNRMPLVEVIRGEKSSEEAISTTVALATKMGKVPVVVNDCPGFLVNRVLFPYFGAFDLLLKQGADFAHVDKVMEKFGWPMGPAYLIDVVGLDTGVHGAEVMAEGFPDRMKPDYKGAIEHLYENKRLGQKNGVGFYKYEMDKRGKPKKVADEATYELLKTTTDSDKQTFEDQAIIDRTMLAFCNETVRCLEDNIVSTPSEADMAMIMGVGFPPFRGGPCRYIDQMGLDNYLALCEKYAYLGKAYEAPQKIRDMAAAGETFYATA</sequence>
<dbReference type="EC" id="4.2.1.17" evidence="1"/>
<dbReference type="EC" id="5.1.2.3" evidence="1"/>
<dbReference type="EC" id="5.3.3.8" evidence="1"/>
<dbReference type="EC" id="1.1.1.35" evidence="1"/>
<dbReference type="EMBL" id="CP000323">
    <property type="protein sequence ID" value="ABE76004.1"/>
    <property type="molecule type" value="Genomic_DNA"/>
</dbReference>
<dbReference type="RefSeq" id="WP_011514537.1">
    <property type="nucleotide sequence ID" value="NC_007969.1"/>
</dbReference>
<dbReference type="SMR" id="Q1Q8J9"/>
<dbReference type="STRING" id="335284.Pcryo_2227"/>
<dbReference type="KEGG" id="pcr:Pcryo_2227"/>
<dbReference type="eggNOG" id="COG1024">
    <property type="taxonomic scope" value="Bacteria"/>
</dbReference>
<dbReference type="eggNOG" id="COG1250">
    <property type="taxonomic scope" value="Bacteria"/>
</dbReference>
<dbReference type="HOGENOM" id="CLU_009834_16_3_6"/>
<dbReference type="UniPathway" id="UPA00659"/>
<dbReference type="Proteomes" id="UP000002425">
    <property type="component" value="Chromosome"/>
</dbReference>
<dbReference type="GO" id="GO:0036125">
    <property type="term" value="C:fatty acid beta-oxidation multienzyme complex"/>
    <property type="evidence" value="ECO:0007669"/>
    <property type="project" value="InterPro"/>
</dbReference>
<dbReference type="GO" id="GO:0008692">
    <property type="term" value="F:3-hydroxybutyryl-CoA epimerase activity"/>
    <property type="evidence" value="ECO:0007669"/>
    <property type="project" value="UniProtKB-UniRule"/>
</dbReference>
<dbReference type="GO" id="GO:0004165">
    <property type="term" value="F:delta(3)-delta(2)-enoyl-CoA isomerase activity"/>
    <property type="evidence" value="ECO:0007669"/>
    <property type="project" value="UniProtKB-UniRule"/>
</dbReference>
<dbReference type="GO" id="GO:0004300">
    <property type="term" value="F:enoyl-CoA hydratase activity"/>
    <property type="evidence" value="ECO:0007669"/>
    <property type="project" value="UniProtKB-UniRule"/>
</dbReference>
<dbReference type="GO" id="GO:0016509">
    <property type="term" value="F:long-chain-3-hydroxyacyl-CoA dehydrogenase activity"/>
    <property type="evidence" value="ECO:0007669"/>
    <property type="project" value="TreeGrafter"/>
</dbReference>
<dbReference type="GO" id="GO:0070403">
    <property type="term" value="F:NAD+ binding"/>
    <property type="evidence" value="ECO:0007669"/>
    <property type="project" value="InterPro"/>
</dbReference>
<dbReference type="GO" id="GO:0006635">
    <property type="term" value="P:fatty acid beta-oxidation"/>
    <property type="evidence" value="ECO:0007669"/>
    <property type="project" value="UniProtKB-UniRule"/>
</dbReference>
<dbReference type="CDD" id="cd06558">
    <property type="entry name" value="crotonase-like"/>
    <property type="match status" value="1"/>
</dbReference>
<dbReference type="FunFam" id="3.40.50.720:FF:000009">
    <property type="entry name" value="Fatty oxidation complex, alpha subunit"/>
    <property type="match status" value="1"/>
</dbReference>
<dbReference type="Gene3D" id="1.10.1040.50">
    <property type="match status" value="1"/>
</dbReference>
<dbReference type="Gene3D" id="3.90.226.10">
    <property type="entry name" value="2-enoyl-CoA Hydratase, Chain A, domain 1"/>
    <property type="match status" value="1"/>
</dbReference>
<dbReference type="Gene3D" id="3.40.50.720">
    <property type="entry name" value="NAD(P)-binding Rossmann-like Domain"/>
    <property type="match status" value="1"/>
</dbReference>
<dbReference type="HAMAP" id="MF_01621">
    <property type="entry name" value="FadB"/>
    <property type="match status" value="1"/>
</dbReference>
<dbReference type="InterPro" id="IPR006180">
    <property type="entry name" value="3-OHacyl-CoA_DH_CS"/>
</dbReference>
<dbReference type="InterPro" id="IPR006176">
    <property type="entry name" value="3-OHacyl-CoA_DH_NAD-bd"/>
</dbReference>
<dbReference type="InterPro" id="IPR006108">
    <property type="entry name" value="3HC_DH_C"/>
</dbReference>
<dbReference type="InterPro" id="IPR008927">
    <property type="entry name" value="6-PGluconate_DH-like_C_sf"/>
</dbReference>
<dbReference type="InterPro" id="IPR029045">
    <property type="entry name" value="ClpP/crotonase-like_dom_sf"/>
</dbReference>
<dbReference type="InterPro" id="IPR001753">
    <property type="entry name" value="Enoyl-CoA_hydra/iso"/>
</dbReference>
<dbReference type="InterPro" id="IPR050136">
    <property type="entry name" value="FA_oxidation_alpha_subunit"/>
</dbReference>
<dbReference type="InterPro" id="IPR012799">
    <property type="entry name" value="FadB"/>
</dbReference>
<dbReference type="InterPro" id="IPR036291">
    <property type="entry name" value="NAD(P)-bd_dom_sf"/>
</dbReference>
<dbReference type="NCBIfam" id="TIGR02437">
    <property type="entry name" value="FadB"/>
    <property type="match status" value="1"/>
</dbReference>
<dbReference type="NCBIfam" id="NF008727">
    <property type="entry name" value="PRK11730.1"/>
    <property type="match status" value="1"/>
</dbReference>
<dbReference type="PANTHER" id="PTHR43612">
    <property type="entry name" value="TRIFUNCTIONAL ENZYME SUBUNIT ALPHA"/>
    <property type="match status" value="1"/>
</dbReference>
<dbReference type="PANTHER" id="PTHR43612:SF3">
    <property type="entry name" value="TRIFUNCTIONAL ENZYME SUBUNIT ALPHA, MITOCHONDRIAL"/>
    <property type="match status" value="1"/>
</dbReference>
<dbReference type="Pfam" id="PF00725">
    <property type="entry name" value="3HCDH"/>
    <property type="match status" value="2"/>
</dbReference>
<dbReference type="Pfam" id="PF02737">
    <property type="entry name" value="3HCDH_N"/>
    <property type="match status" value="1"/>
</dbReference>
<dbReference type="Pfam" id="PF00378">
    <property type="entry name" value="ECH_1"/>
    <property type="match status" value="1"/>
</dbReference>
<dbReference type="SUPFAM" id="SSF48179">
    <property type="entry name" value="6-phosphogluconate dehydrogenase C-terminal domain-like"/>
    <property type="match status" value="2"/>
</dbReference>
<dbReference type="SUPFAM" id="SSF52096">
    <property type="entry name" value="ClpP/crotonase"/>
    <property type="match status" value="1"/>
</dbReference>
<dbReference type="SUPFAM" id="SSF51735">
    <property type="entry name" value="NAD(P)-binding Rossmann-fold domains"/>
    <property type="match status" value="1"/>
</dbReference>
<dbReference type="PROSITE" id="PS00067">
    <property type="entry name" value="3HCDH"/>
    <property type="match status" value="1"/>
</dbReference>
<reference key="1">
    <citation type="submission" date="2006-03" db="EMBL/GenBank/DDBJ databases">
        <title>Complete sequence of chromosome of Psychrobacter cryohalolentis K5.</title>
        <authorList>
            <consortium name="US DOE Joint Genome Institute"/>
            <person name="Copeland A."/>
            <person name="Lucas S."/>
            <person name="Lapidus A."/>
            <person name="Barry K."/>
            <person name="Detter J.C."/>
            <person name="Glavina T."/>
            <person name="Hammon N."/>
            <person name="Israni S."/>
            <person name="Dalin E."/>
            <person name="Tice H."/>
            <person name="Pitluck S."/>
            <person name="Brettin T."/>
            <person name="Bruce D."/>
            <person name="Han C."/>
            <person name="Tapia R."/>
            <person name="Sims D.R."/>
            <person name="Gilna P."/>
            <person name="Schmutz J."/>
            <person name="Larimer F."/>
            <person name="Land M."/>
            <person name="Hauser L."/>
            <person name="Kyrpides N."/>
            <person name="Kim E."/>
            <person name="Richardson P."/>
        </authorList>
    </citation>
    <scope>NUCLEOTIDE SEQUENCE [LARGE SCALE GENOMIC DNA]</scope>
    <source>
        <strain>ATCC BAA-1226 / DSM 17306 / VKM B-2378 / K5</strain>
    </source>
</reference>
<keyword id="KW-0276">Fatty acid metabolism</keyword>
<keyword id="KW-0413">Isomerase</keyword>
<keyword id="KW-0442">Lipid degradation</keyword>
<keyword id="KW-0443">Lipid metabolism</keyword>
<keyword id="KW-0456">Lyase</keyword>
<keyword id="KW-0511">Multifunctional enzyme</keyword>
<keyword id="KW-0520">NAD</keyword>
<keyword id="KW-0560">Oxidoreductase</keyword>
<gene>
    <name evidence="1" type="primary">fadB</name>
    <name type="ordered locus">Pcryo_2227</name>
</gene>
<evidence type="ECO:0000255" key="1">
    <source>
        <dbReference type="HAMAP-Rule" id="MF_01621"/>
    </source>
</evidence>
<accession>Q1Q8J9</accession>
<protein>
    <recommendedName>
        <fullName evidence="1">Fatty acid oxidation complex subunit alpha</fullName>
    </recommendedName>
    <domain>
        <recommendedName>
            <fullName evidence="1">Enoyl-CoA hydratase/Delta(3)-cis-Delta(2)-trans-enoyl-CoA isomerase/3-hydroxybutyryl-CoA epimerase</fullName>
            <ecNumber evidence="1">4.2.1.17</ecNumber>
            <ecNumber evidence="1">5.1.2.3</ecNumber>
            <ecNumber evidence="1">5.3.3.8</ecNumber>
        </recommendedName>
    </domain>
    <domain>
        <recommendedName>
            <fullName evidence="1">3-hydroxyacyl-CoA dehydrogenase</fullName>
            <ecNumber evidence="1">1.1.1.35</ecNumber>
        </recommendedName>
    </domain>
</protein>
<organism>
    <name type="scientific">Psychrobacter cryohalolentis (strain ATCC BAA-1226 / DSM 17306 / VKM B-2378 / K5)</name>
    <dbReference type="NCBI Taxonomy" id="335284"/>
    <lineage>
        <taxon>Bacteria</taxon>
        <taxon>Pseudomonadati</taxon>
        <taxon>Pseudomonadota</taxon>
        <taxon>Gammaproteobacteria</taxon>
        <taxon>Moraxellales</taxon>
        <taxon>Moraxellaceae</taxon>
        <taxon>Psychrobacter</taxon>
    </lineage>
</organism>